<organism>
    <name type="scientific">Bos taurus</name>
    <name type="common">Bovine</name>
    <dbReference type="NCBI Taxonomy" id="9913"/>
    <lineage>
        <taxon>Eukaryota</taxon>
        <taxon>Metazoa</taxon>
        <taxon>Chordata</taxon>
        <taxon>Craniata</taxon>
        <taxon>Vertebrata</taxon>
        <taxon>Euteleostomi</taxon>
        <taxon>Mammalia</taxon>
        <taxon>Eutheria</taxon>
        <taxon>Laurasiatheria</taxon>
        <taxon>Artiodactyla</taxon>
        <taxon>Ruminantia</taxon>
        <taxon>Pecora</taxon>
        <taxon>Bovidae</taxon>
        <taxon>Bovinae</taxon>
        <taxon>Bos</taxon>
    </lineage>
</organism>
<proteinExistence type="evidence at protein level"/>
<feature type="signal peptide" evidence="4">
    <location>
        <begin position="1"/>
        <end position="20"/>
    </location>
</feature>
<feature type="propeptide" id="PRO_0000012368" evidence="4">
    <location>
        <begin position="21"/>
        <end position="41"/>
    </location>
</feature>
<feature type="chain" id="PRO_0000012369" description="Atrial natriuretic peptide receptor 3">
    <location>
        <begin position="42"/>
        <end position="537"/>
    </location>
</feature>
<feature type="topological domain" description="Extracellular" evidence="4">
    <location>
        <begin position="42"/>
        <end position="477"/>
    </location>
</feature>
<feature type="transmembrane region" description="Helical" evidence="4">
    <location>
        <begin position="478"/>
        <end position="500"/>
    </location>
</feature>
<feature type="topological domain" description="Cytoplasmic" evidence="4">
    <location>
        <begin position="501"/>
        <end position="537"/>
    </location>
</feature>
<feature type="glycosylation site" description="N-linked (GlcNAc...) asparagine" evidence="4">
    <location>
        <position position="82"/>
    </location>
</feature>
<feature type="glycosylation site" description="N-linked (GlcNAc...) asparagine" evidence="4">
    <location>
        <position position="289"/>
    </location>
</feature>
<feature type="glycosylation site" description="N-linked (GlcNAc...) asparagine" evidence="4">
    <location>
        <position position="390"/>
    </location>
</feature>
<feature type="disulfide bond" evidence="5">
    <location>
        <begin position="104"/>
        <end position="132"/>
    </location>
</feature>
<feature type="disulfide bond" evidence="5">
    <location>
        <begin position="209"/>
        <end position="257"/>
    </location>
</feature>
<feature type="disulfide bond" description="Interchain" evidence="5">
    <location>
        <position position="469"/>
    </location>
</feature>
<feature type="splice variant" id="VSP_001811" description="In isoform 2." evidence="6">
    <original>SG</original>
    <variation>C</variation>
    <location>
        <begin position="472"/>
        <end position="473"/>
    </location>
</feature>
<feature type="sequence conflict" description="In Ref. 1; AAA30376." evidence="7" ref="1">
    <original>V</original>
    <variation>A</variation>
    <location>
        <position position="324"/>
    </location>
</feature>
<evidence type="ECO:0000250" key="1"/>
<evidence type="ECO:0000250" key="2">
    <source>
        <dbReference type="UniProtKB" id="P17342"/>
    </source>
</evidence>
<evidence type="ECO:0000250" key="3">
    <source>
        <dbReference type="UniProtKB" id="P70180"/>
    </source>
</evidence>
<evidence type="ECO:0000255" key="4"/>
<evidence type="ECO:0000269" key="5">
    <source>
    </source>
</evidence>
<evidence type="ECO:0000303" key="6">
    <source>
    </source>
</evidence>
<evidence type="ECO:0000305" key="7"/>
<sequence>MPSLLVLTFSACVLLGWALLADCTGGGGSGGAGPGRGRREREALPPQKIEVLVLLPQDDSYLFSLARVRPAIEYALRTVEGNATGRRLLPAGTRFQVAYEDSDCGNRALFSLVDRVAAARGAKPDLILGPVCEYAAAPVARLASHWDLPMLSAGALAAGFQHKDTEYSHLTRVAPSYAKMGEMMLALFRHHQWSRAVLVYSDDKLERNCFFTLEGVHEVFQEEGLHTSAYNFDETKDLDLEDIVRHIQASERVVIMCASSDTIRGIMLAAHRHGMTSGDYAFFNIELFNSSFYGDGSWKRGDKHDFEAKQAYSSLQTITLLRTVKPEFEKFSMEVKSSVEKQGLSEEDYVNMFVEGFHDAILLYVLALREVLRAGYSKKDGGKIIQQTWNRTFEGIAGQVSIDANGDRYGDFSVIAMTDTEAGTQEVIGDYFGKEGRFEMRPNVKYPWGPLKLRIDETRMVEHTNSSPCKASGGLEESAVTGIVVGALLGAGLLMAFYFFRKKYRITIERRNQQEESNVGKHRELREDSIRSHFSVA</sequence>
<reference key="1">
    <citation type="journal article" date="1988" name="J. Biol. Chem.">
        <title>Atrial natriuretic peptide clearance receptor. Complete sequence and functional expression of cDNA clones.</title>
        <authorList>
            <person name="Fuller F."/>
            <person name="Porter J.G."/>
            <person name="Arfsten A.E."/>
            <person name="James J.M."/>
            <person name="Schilling J.W."/>
            <person name="Scarborough R.M."/>
            <person name="Lewicki J.A."/>
            <person name="Schenk D.B."/>
        </authorList>
    </citation>
    <scope>NUCLEOTIDE SEQUENCE [MRNA] (ISOFORM 1)</scope>
</reference>
<reference key="2">
    <citation type="journal article" date="1991" name="J. Biol. Chem.">
        <title>Structure of the bovine atrial natriuretic peptide receptor (type C) gene.</title>
        <authorList>
            <person name="Saheki T."/>
            <person name="Mizuno T."/>
            <person name="Iwata T."/>
            <person name="Saito Y."/>
            <person name="Nagasawa T."/>
            <person name="Mizuno K.U."/>
            <person name="Ito F."/>
            <person name="Ito T."/>
            <person name="Hagiwara H."/>
            <person name="Hirose S."/>
        </authorList>
    </citation>
    <scope>NUCLEOTIDE SEQUENCE [GENOMIC DNA] (ISOFORM 1)</scope>
</reference>
<reference key="3">
    <citation type="journal article" date="1993" name="J. Biol. Chem.">
        <title>A variant form of the type C atrial natriuretic peptide receptor generated by alternative RNA splicing.</title>
        <authorList>
            <person name="Mizuno T."/>
            <person name="Iwashina M."/>
            <person name="Itakura M."/>
            <person name="Hagiwara H."/>
            <person name="Hirose S."/>
        </authorList>
    </citation>
    <scope>NUCLEOTIDE SEQUENCE [MRNA] (ISOFORM 2)</scope>
    <source>
        <tissue>Lung</tissue>
    </source>
</reference>
<reference key="4">
    <citation type="journal article" date="1989" name="Biochem. J.">
        <title>Purification and properties of active atrial-natriuretic-peptide receptor (type C) from bovine lung.</title>
        <authorList>
            <person name="Uchida K."/>
            <person name="Mizuno T."/>
            <person name="Shimonaka M."/>
            <person name="Sugiura N."/>
            <person name="Nara K."/>
            <person name="Ling N."/>
            <person name="Hagiwara H."/>
            <person name="Hirose S."/>
        </authorList>
    </citation>
    <scope>PROTEIN SEQUENCE OF 151-179; 310-325 AND 446-452</scope>
    <source>
        <tissue>Lung</tissue>
    </source>
</reference>
<reference key="5">
    <citation type="journal article" date="1994" name="J. Biol. Chem.">
        <title>Mutational analysis of disulfide bridges in the type C atrial natriuretic peptide receptor.</title>
        <authorList>
            <person name="Itakura M."/>
            <person name="Iwashina M."/>
            <person name="Mizuno T."/>
            <person name="Ito T."/>
            <person name="Hagiwara H."/>
            <person name="Hirose S."/>
        </authorList>
    </citation>
    <scope>DISULFIDE BONDS</scope>
</reference>
<gene>
    <name type="primary">NPR3</name>
    <name type="synonym">ANPRC</name>
</gene>
<dbReference type="EMBL" id="J03876">
    <property type="protein sequence ID" value="AAA30376.1"/>
    <property type="molecule type" value="mRNA"/>
</dbReference>
<dbReference type="EMBL" id="D90372">
    <property type="protein sequence ID" value="BAA14380.1"/>
    <property type="molecule type" value="Genomic_DNA"/>
</dbReference>
<dbReference type="EMBL" id="D13508">
    <property type="protein sequence ID" value="BAA02726.1"/>
    <property type="molecule type" value="mRNA"/>
</dbReference>
<dbReference type="PIR" id="A28111">
    <property type="entry name" value="A28111"/>
</dbReference>
<dbReference type="PIR" id="A45409">
    <property type="entry name" value="A45409"/>
</dbReference>
<dbReference type="RefSeq" id="NP_776552.1">
    <property type="nucleotide sequence ID" value="NM_174127.2"/>
</dbReference>
<dbReference type="SMR" id="P10730"/>
<dbReference type="FunCoup" id="P10730">
    <property type="interactions" value="139"/>
</dbReference>
<dbReference type="STRING" id="9913.ENSBTAP00000069735"/>
<dbReference type="GlyCosmos" id="P10730">
    <property type="glycosylation" value="3 sites, No reported glycans"/>
</dbReference>
<dbReference type="GlyGen" id="P10730">
    <property type="glycosylation" value="3 sites"/>
</dbReference>
<dbReference type="PaxDb" id="9913-ENSBTAP00000036561"/>
<dbReference type="GeneID" id="281358"/>
<dbReference type="KEGG" id="bta:281358"/>
<dbReference type="CTD" id="4883"/>
<dbReference type="eggNOG" id="KOG1023">
    <property type="taxonomic scope" value="Eukaryota"/>
</dbReference>
<dbReference type="InParanoid" id="P10730"/>
<dbReference type="OrthoDB" id="10065302at2759"/>
<dbReference type="Proteomes" id="UP000009136">
    <property type="component" value="Unplaced"/>
</dbReference>
<dbReference type="GO" id="GO:0005886">
    <property type="term" value="C:plasma membrane"/>
    <property type="evidence" value="ECO:0007669"/>
    <property type="project" value="UniProtKB-SubCell"/>
</dbReference>
<dbReference type="GO" id="GO:0016941">
    <property type="term" value="F:natriuretic peptide receptor activity"/>
    <property type="evidence" value="ECO:0000250"/>
    <property type="project" value="UniProtKB"/>
</dbReference>
<dbReference type="GO" id="GO:0017046">
    <property type="term" value="F:peptide hormone binding"/>
    <property type="evidence" value="ECO:0000318"/>
    <property type="project" value="GO_Central"/>
</dbReference>
<dbReference type="GO" id="GO:0002158">
    <property type="term" value="P:osteoclast proliferation"/>
    <property type="evidence" value="ECO:0000250"/>
    <property type="project" value="UniProtKB"/>
</dbReference>
<dbReference type="GO" id="GO:0035810">
    <property type="term" value="P:positive regulation of urine volume"/>
    <property type="evidence" value="ECO:0000250"/>
    <property type="project" value="UniProtKB"/>
</dbReference>
<dbReference type="GO" id="GO:0008217">
    <property type="term" value="P:regulation of blood pressure"/>
    <property type="evidence" value="ECO:0000250"/>
    <property type="project" value="UniProtKB"/>
</dbReference>
<dbReference type="GO" id="GO:0033688">
    <property type="term" value="P:regulation of osteoblast proliferation"/>
    <property type="evidence" value="ECO:0000250"/>
    <property type="project" value="UniProtKB"/>
</dbReference>
<dbReference type="GO" id="GO:0007165">
    <property type="term" value="P:signal transduction"/>
    <property type="evidence" value="ECO:0000318"/>
    <property type="project" value="GO_Central"/>
</dbReference>
<dbReference type="GO" id="GO:0001501">
    <property type="term" value="P:skeletal system development"/>
    <property type="evidence" value="ECO:0000250"/>
    <property type="project" value="UniProtKB"/>
</dbReference>
<dbReference type="CDD" id="cd06386">
    <property type="entry name" value="PBP1_NPR_C"/>
    <property type="match status" value="1"/>
</dbReference>
<dbReference type="CDD" id="cd12841">
    <property type="entry name" value="TM_EphA1"/>
    <property type="match status" value="1"/>
</dbReference>
<dbReference type="FunFam" id="3.40.50.2300:FF:000147">
    <property type="entry name" value="Atrial natriuretic peptide receptor 3"/>
    <property type="match status" value="1"/>
</dbReference>
<dbReference type="FunFam" id="3.40.50.2300:FF:000246">
    <property type="entry name" value="Atrial natriuretic peptide receptor 3"/>
    <property type="match status" value="1"/>
</dbReference>
<dbReference type="Gene3D" id="3.40.50.2300">
    <property type="match status" value="2"/>
</dbReference>
<dbReference type="InterPro" id="IPR001828">
    <property type="entry name" value="ANF_lig-bd_rcpt"/>
</dbReference>
<dbReference type="InterPro" id="IPR052612">
    <property type="entry name" value="ANP_Clearance_Receptor"/>
</dbReference>
<dbReference type="InterPro" id="IPR001170">
    <property type="entry name" value="ANPR/GUC"/>
</dbReference>
<dbReference type="InterPro" id="IPR028082">
    <property type="entry name" value="Peripla_BP_I"/>
</dbReference>
<dbReference type="PANTHER" id="PTHR44755:SF1">
    <property type="entry name" value="ATRIAL NATRIURETIC PEPTIDE RECEPTOR 3"/>
    <property type="match status" value="1"/>
</dbReference>
<dbReference type="PANTHER" id="PTHR44755">
    <property type="entry name" value="NATRIURETIC PEPTIDE RECEPTOR 3-RELATED"/>
    <property type="match status" value="1"/>
</dbReference>
<dbReference type="Pfam" id="PF01094">
    <property type="entry name" value="ANF_receptor"/>
    <property type="match status" value="1"/>
</dbReference>
<dbReference type="PRINTS" id="PR00255">
    <property type="entry name" value="NATPEPTIDER"/>
</dbReference>
<dbReference type="SUPFAM" id="SSF53822">
    <property type="entry name" value="Periplasmic binding protein-like I"/>
    <property type="match status" value="1"/>
</dbReference>
<dbReference type="PROSITE" id="PS00458">
    <property type="entry name" value="ANF_RECEPTORS"/>
    <property type="match status" value="1"/>
</dbReference>
<comment type="function">
    <text evidence="3">Receptor for the natriuretic peptide hormones, binding with similar affinities atrial natriuretic peptide NPPA/ANP, brain natriuretic peptide NPPB/BNP, and C-type natriuretic peptide NPPC/CNP. May function as a clearance receptor for NPPA, NPPB and NPPC, regulating their local concentrations and effects. Acts as a regulator of osteoblast differentiation and bone growth by binding to its ligand osteocrin, thereby preventing binding between NPR3/NPR-C and natriuretic peptides, leading to increase cGMP production.</text>
</comment>
<comment type="subunit">
    <text evidence="2 3">Homodimer; disulfide-linked. Interacts with OSTN.</text>
</comment>
<comment type="subcellular location">
    <subcellularLocation>
        <location evidence="2">Cell membrane</location>
        <topology>Single-pass type I membrane protein</topology>
    </subcellularLocation>
</comment>
<comment type="alternative products">
    <event type="alternative splicing"/>
    <isoform>
        <id>P10730-1</id>
        <name>1</name>
        <sequence type="displayed"/>
    </isoform>
    <isoform>
        <id>P10730-2</id>
        <name>2</name>
        <sequence type="described" ref="VSP_001811"/>
    </isoform>
</comment>
<comment type="miscellaneous">
    <text evidence="1">Has low affinity for peptide hormones in the absence of bound chloride.</text>
</comment>
<comment type="similarity">
    <text evidence="7">Belongs to the ANF receptor family.</text>
</comment>
<keyword id="KW-0025">Alternative splicing</keyword>
<keyword id="KW-1003">Cell membrane</keyword>
<keyword id="KW-0903">Direct protein sequencing</keyword>
<keyword id="KW-1015">Disulfide bond</keyword>
<keyword id="KW-0325">Glycoprotein</keyword>
<keyword id="KW-0472">Membrane</keyword>
<keyword id="KW-0675">Receptor</keyword>
<keyword id="KW-1185">Reference proteome</keyword>
<keyword id="KW-0732">Signal</keyword>
<keyword id="KW-0812">Transmembrane</keyword>
<keyword id="KW-1133">Transmembrane helix</keyword>
<accession>P10730</accession>
<accession>P20644</accession>
<protein>
    <recommendedName>
        <fullName>Atrial natriuretic peptide receptor 3</fullName>
    </recommendedName>
    <alternativeName>
        <fullName>Atrial natriuretic peptide clearance receptor</fullName>
    </alternativeName>
    <alternativeName>
        <fullName>Atrial natriuretic peptide receptor type C</fullName>
        <shortName>ANP-C</shortName>
        <shortName>ANPR-C</shortName>
        <shortName>NPR-C</shortName>
    </alternativeName>
</protein>
<name>ANPRC_BOVIN</name>